<evidence type="ECO:0000255" key="1">
    <source>
        <dbReference type="HAMAP-Rule" id="MF_01554"/>
    </source>
</evidence>
<dbReference type="EC" id="5.4.2.10" evidence="1"/>
<dbReference type="EMBL" id="CP000056">
    <property type="protein sequence ID" value="AAX71855.1"/>
    <property type="molecule type" value="Genomic_DNA"/>
</dbReference>
<dbReference type="RefSeq" id="WP_011184463.1">
    <property type="nucleotide sequence ID" value="NC_007296.2"/>
</dbReference>
<dbReference type="SMR" id="Q48TV1"/>
<dbReference type="KEGG" id="spb:M28_Spy0742"/>
<dbReference type="HOGENOM" id="CLU_016950_7_0_9"/>
<dbReference type="GO" id="GO:0005829">
    <property type="term" value="C:cytosol"/>
    <property type="evidence" value="ECO:0007669"/>
    <property type="project" value="TreeGrafter"/>
</dbReference>
<dbReference type="GO" id="GO:0000287">
    <property type="term" value="F:magnesium ion binding"/>
    <property type="evidence" value="ECO:0007669"/>
    <property type="project" value="UniProtKB-UniRule"/>
</dbReference>
<dbReference type="GO" id="GO:0008966">
    <property type="term" value="F:phosphoglucosamine mutase activity"/>
    <property type="evidence" value="ECO:0007669"/>
    <property type="project" value="UniProtKB-UniRule"/>
</dbReference>
<dbReference type="GO" id="GO:0004615">
    <property type="term" value="F:phosphomannomutase activity"/>
    <property type="evidence" value="ECO:0007669"/>
    <property type="project" value="TreeGrafter"/>
</dbReference>
<dbReference type="GO" id="GO:0005975">
    <property type="term" value="P:carbohydrate metabolic process"/>
    <property type="evidence" value="ECO:0007669"/>
    <property type="project" value="InterPro"/>
</dbReference>
<dbReference type="GO" id="GO:0009252">
    <property type="term" value="P:peptidoglycan biosynthetic process"/>
    <property type="evidence" value="ECO:0007669"/>
    <property type="project" value="TreeGrafter"/>
</dbReference>
<dbReference type="GO" id="GO:0006048">
    <property type="term" value="P:UDP-N-acetylglucosamine biosynthetic process"/>
    <property type="evidence" value="ECO:0007669"/>
    <property type="project" value="TreeGrafter"/>
</dbReference>
<dbReference type="CDD" id="cd05802">
    <property type="entry name" value="GlmM"/>
    <property type="match status" value="1"/>
</dbReference>
<dbReference type="FunFam" id="3.30.310.50:FF:000001">
    <property type="entry name" value="Phosphoglucosamine mutase"/>
    <property type="match status" value="1"/>
</dbReference>
<dbReference type="FunFam" id="3.40.120.10:FF:000001">
    <property type="entry name" value="Phosphoglucosamine mutase"/>
    <property type="match status" value="1"/>
</dbReference>
<dbReference type="FunFam" id="3.40.120.10:FF:000002">
    <property type="entry name" value="Phosphoglucosamine mutase"/>
    <property type="match status" value="1"/>
</dbReference>
<dbReference type="Gene3D" id="3.40.120.10">
    <property type="entry name" value="Alpha-D-Glucose-1,6-Bisphosphate, subunit A, domain 3"/>
    <property type="match status" value="3"/>
</dbReference>
<dbReference type="Gene3D" id="3.30.310.50">
    <property type="entry name" value="Alpha-D-phosphohexomutase, C-terminal domain"/>
    <property type="match status" value="1"/>
</dbReference>
<dbReference type="HAMAP" id="MF_01554_B">
    <property type="entry name" value="GlmM_B"/>
    <property type="match status" value="1"/>
</dbReference>
<dbReference type="InterPro" id="IPR005844">
    <property type="entry name" value="A-D-PHexomutase_a/b/a-I"/>
</dbReference>
<dbReference type="InterPro" id="IPR016055">
    <property type="entry name" value="A-D-PHexomutase_a/b/a-I/II/III"/>
</dbReference>
<dbReference type="InterPro" id="IPR005845">
    <property type="entry name" value="A-D-PHexomutase_a/b/a-II"/>
</dbReference>
<dbReference type="InterPro" id="IPR005846">
    <property type="entry name" value="A-D-PHexomutase_a/b/a-III"/>
</dbReference>
<dbReference type="InterPro" id="IPR005843">
    <property type="entry name" value="A-D-PHexomutase_C"/>
</dbReference>
<dbReference type="InterPro" id="IPR036900">
    <property type="entry name" value="A-D-PHexomutase_C_sf"/>
</dbReference>
<dbReference type="InterPro" id="IPR016066">
    <property type="entry name" value="A-D-PHexomutase_CS"/>
</dbReference>
<dbReference type="InterPro" id="IPR005841">
    <property type="entry name" value="Alpha-D-phosphohexomutase_SF"/>
</dbReference>
<dbReference type="InterPro" id="IPR006352">
    <property type="entry name" value="GlmM_bact"/>
</dbReference>
<dbReference type="InterPro" id="IPR050060">
    <property type="entry name" value="Phosphoglucosamine_mutase"/>
</dbReference>
<dbReference type="NCBIfam" id="TIGR01455">
    <property type="entry name" value="glmM"/>
    <property type="match status" value="1"/>
</dbReference>
<dbReference type="PANTHER" id="PTHR42946:SF1">
    <property type="entry name" value="PHOSPHOGLUCOMUTASE (ALPHA-D-GLUCOSE-1,6-BISPHOSPHATE-DEPENDENT)"/>
    <property type="match status" value="1"/>
</dbReference>
<dbReference type="PANTHER" id="PTHR42946">
    <property type="entry name" value="PHOSPHOHEXOSE MUTASE"/>
    <property type="match status" value="1"/>
</dbReference>
<dbReference type="Pfam" id="PF02878">
    <property type="entry name" value="PGM_PMM_I"/>
    <property type="match status" value="1"/>
</dbReference>
<dbReference type="Pfam" id="PF02879">
    <property type="entry name" value="PGM_PMM_II"/>
    <property type="match status" value="1"/>
</dbReference>
<dbReference type="Pfam" id="PF02880">
    <property type="entry name" value="PGM_PMM_III"/>
    <property type="match status" value="1"/>
</dbReference>
<dbReference type="Pfam" id="PF00408">
    <property type="entry name" value="PGM_PMM_IV"/>
    <property type="match status" value="1"/>
</dbReference>
<dbReference type="PRINTS" id="PR00509">
    <property type="entry name" value="PGMPMM"/>
</dbReference>
<dbReference type="SUPFAM" id="SSF55957">
    <property type="entry name" value="Phosphoglucomutase, C-terminal domain"/>
    <property type="match status" value="1"/>
</dbReference>
<dbReference type="SUPFAM" id="SSF53738">
    <property type="entry name" value="Phosphoglucomutase, first 3 domains"/>
    <property type="match status" value="3"/>
</dbReference>
<dbReference type="PROSITE" id="PS00710">
    <property type="entry name" value="PGM_PMM"/>
    <property type="match status" value="1"/>
</dbReference>
<gene>
    <name evidence="1" type="primary">glmM</name>
    <name type="ordered locus">M28_Spy0742</name>
</gene>
<proteinExistence type="inferred from homology"/>
<feature type="chain" id="PRO_0000147977" description="Phosphoglucosamine mutase">
    <location>
        <begin position="1"/>
        <end position="451"/>
    </location>
</feature>
<feature type="active site" description="Phosphoserine intermediate" evidence="1">
    <location>
        <position position="101"/>
    </location>
</feature>
<feature type="binding site" description="via phosphate group" evidence="1">
    <location>
        <position position="101"/>
    </location>
    <ligand>
        <name>Mg(2+)</name>
        <dbReference type="ChEBI" id="CHEBI:18420"/>
    </ligand>
</feature>
<feature type="binding site" evidence="1">
    <location>
        <position position="240"/>
    </location>
    <ligand>
        <name>Mg(2+)</name>
        <dbReference type="ChEBI" id="CHEBI:18420"/>
    </ligand>
</feature>
<feature type="binding site" evidence="1">
    <location>
        <position position="242"/>
    </location>
    <ligand>
        <name>Mg(2+)</name>
        <dbReference type="ChEBI" id="CHEBI:18420"/>
    </ligand>
</feature>
<feature type="binding site" evidence="1">
    <location>
        <position position="244"/>
    </location>
    <ligand>
        <name>Mg(2+)</name>
        <dbReference type="ChEBI" id="CHEBI:18420"/>
    </ligand>
</feature>
<feature type="modified residue" description="Phosphoserine" evidence="1">
    <location>
        <position position="101"/>
    </location>
</feature>
<comment type="function">
    <text evidence="1">Catalyzes the conversion of glucosamine-6-phosphate to glucosamine-1-phosphate.</text>
</comment>
<comment type="catalytic activity">
    <reaction evidence="1">
        <text>alpha-D-glucosamine 1-phosphate = D-glucosamine 6-phosphate</text>
        <dbReference type="Rhea" id="RHEA:23424"/>
        <dbReference type="ChEBI" id="CHEBI:58516"/>
        <dbReference type="ChEBI" id="CHEBI:58725"/>
        <dbReference type="EC" id="5.4.2.10"/>
    </reaction>
</comment>
<comment type="cofactor">
    <cofactor evidence="1">
        <name>Mg(2+)</name>
        <dbReference type="ChEBI" id="CHEBI:18420"/>
    </cofactor>
    <text evidence="1">Binds 1 Mg(2+) ion per subunit.</text>
</comment>
<comment type="PTM">
    <text evidence="1">Activated by phosphorylation.</text>
</comment>
<comment type="similarity">
    <text evidence="1">Belongs to the phosphohexose mutase family.</text>
</comment>
<accession>Q48TV1</accession>
<protein>
    <recommendedName>
        <fullName evidence="1">Phosphoglucosamine mutase</fullName>
        <ecNumber evidence="1">5.4.2.10</ecNumber>
    </recommendedName>
</protein>
<sequence length="451" mass="48381">MGKYFGTDGVRGEANVELTPELAFKLGRFGGYVLSQHETERPKVFVARDTRISGEMLESALIAGLLSVGIEVYKLGVLATPGVSYLVRTEKASAGVMISASHNPALDNGIKFFGNDGFKLADDQELEIEALLDAPEDTLPRPSAEGLGTLVDYPEGLRKYEKFLVTTGTDLSGMTVALDTANGAASVSARDVFLDLNAEIAVIGEKPNGLNINDGVGSTHPEQLQELVKETGADLGLAFDGDSDRLIAVDETGEIVDGDRIMFIIGKYLSEKGLLAHNTIVTTVMSNLGFHKALDKQGINKAITAVGDRYVVEEMRSSGYNLGGEQSGHVIIMDYNTTGDGQLTAIQLAKVMKETGKSLSELAAEVTIYPQKLVNIRVENSMKDRAMEVPAIANIIAKMEDEMAGNGRILVRPSGTEPLLRVMAEAPTDAEVDYYVDTIADVVRTEIGCDN</sequence>
<organism>
    <name type="scientific">Streptococcus pyogenes serotype M28 (strain MGAS6180)</name>
    <dbReference type="NCBI Taxonomy" id="319701"/>
    <lineage>
        <taxon>Bacteria</taxon>
        <taxon>Bacillati</taxon>
        <taxon>Bacillota</taxon>
        <taxon>Bacilli</taxon>
        <taxon>Lactobacillales</taxon>
        <taxon>Streptococcaceae</taxon>
        <taxon>Streptococcus</taxon>
    </lineage>
</organism>
<keyword id="KW-0413">Isomerase</keyword>
<keyword id="KW-0460">Magnesium</keyword>
<keyword id="KW-0479">Metal-binding</keyword>
<keyword id="KW-0597">Phosphoprotein</keyword>
<name>GLMM_STRPM</name>
<reference key="1">
    <citation type="journal article" date="2005" name="J. Infect. Dis.">
        <title>Genome sequence of a serotype M28 strain of group A Streptococcus: potential new insights into puerperal sepsis and bacterial disease specificity.</title>
        <authorList>
            <person name="Green N.M."/>
            <person name="Zhang S."/>
            <person name="Porcella S.F."/>
            <person name="Nagiec M.J."/>
            <person name="Barbian K.D."/>
            <person name="Beres S.B."/>
            <person name="Lefebvre R.B."/>
            <person name="Musser J.M."/>
        </authorList>
    </citation>
    <scope>NUCLEOTIDE SEQUENCE [LARGE SCALE GENOMIC DNA]</scope>
    <source>
        <strain>MGAS6180</strain>
    </source>
</reference>